<comment type="function">
    <text evidence="1">Negatively regulates transcription of bacterial ribonucleotide reductase nrd genes and operons by binding to NrdR-boxes.</text>
</comment>
<comment type="cofactor">
    <cofactor evidence="1">
        <name>Zn(2+)</name>
        <dbReference type="ChEBI" id="CHEBI:29105"/>
    </cofactor>
    <text evidence="1">Binds 1 zinc ion.</text>
</comment>
<comment type="similarity">
    <text evidence="1">Belongs to the NrdR family.</text>
</comment>
<feature type="chain" id="PRO_0000182349" description="Transcriptional repressor NrdR">
    <location>
        <begin position="1"/>
        <end position="156"/>
    </location>
</feature>
<feature type="domain" description="ATP-cone" evidence="1">
    <location>
        <begin position="49"/>
        <end position="139"/>
    </location>
</feature>
<feature type="zinc finger region" evidence="1">
    <location>
        <begin position="3"/>
        <end position="34"/>
    </location>
</feature>
<sequence length="156" mass="18204">MKCPKCNSTQSKVVDSRHADELNAIRRRRECENCGTRFTTFEHIEVSQLIVVKKDGTREQFSREKILNGLVRSCEKRPVRYQQLEDITNKVEWQLRDEGHTEVSSRDIGEHVMNLLMHVDQVSYVRFASVYKEFKDVDQLLASMQGILSENKRSDA</sequence>
<gene>
    <name evidence="1" type="primary">nrdR</name>
    <name type="ordered locus">SAV1686</name>
</gene>
<evidence type="ECO:0000255" key="1">
    <source>
        <dbReference type="HAMAP-Rule" id="MF_00440"/>
    </source>
</evidence>
<accession>P67315</accession>
<accession>Q99TH6</accession>
<organism>
    <name type="scientific">Staphylococcus aureus (strain Mu50 / ATCC 700699)</name>
    <dbReference type="NCBI Taxonomy" id="158878"/>
    <lineage>
        <taxon>Bacteria</taxon>
        <taxon>Bacillati</taxon>
        <taxon>Bacillota</taxon>
        <taxon>Bacilli</taxon>
        <taxon>Bacillales</taxon>
        <taxon>Staphylococcaceae</taxon>
        <taxon>Staphylococcus</taxon>
    </lineage>
</organism>
<name>NRDR_STAAM</name>
<dbReference type="EMBL" id="BA000017">
    <property type="protein sequence ID" value="BAB57848.1"/>
    <property type="molecule type" value="Genomic_DNA"/>
</dbReference>
<dbReference type="RefSeq" id="WP_000650082.1">
    <property type="nucleotide sequence ID" value="NC_002758.2"/>
</dbReference>
<dbReference type="SMR" id="P67315"/>
<dbReference type="GeneID" id="66839865"/>
<dbReference type="KEGG" id="sav:SAV1686"/>
<dbReference type="HOGENOM" id="CLU_108412_0_0_9"/>
<dbReference type="PhylomeDB" id="P67315"/>
<dbReference type="Proteomes" id="UP000002481">
    <property type="component" value="Chromosome"/>
</dbReference>
<dbReference type="GO" id="GO:0005524">
    <property type="term" value="F:ATP binding"/>
    <property type="evidence" value="ECO:0007669"/>
    <property type="project" value="UniProtKB-KW"/>
</dbReference>
<dbReference type="GO" id="GO:0003677">
    <property type="term" value="F:DNA binding"/>
    <property type="evidence" value="ECO:0007669"/>
    <property type="project" value="UniProtKB-KW"/>
</dbReference>
<dbReference type="GO" id="GO:0008270">
    <property type="term" value="F:zinc ion binding"/>
    <property type="evidence" value="ECO:0007669"/>
    <property type="project" value="UniProtKB-UniRule"/>
</dbReference>
<dbReference type="GO" id="GO:0045892">
    <property type="term" value="P:negative regulation of DNA-templated transcription"/>
    <property type="evidence" value="ECO:0007669"/>
    <property type="project" value="UniProtKB-UniRule"/>
</dbReference>
<dbReference type="HAMAP" id="MF_00440">
    <property type="entry name" value="NrdR"/>
    <property type="match status" value="1"/>
</dbReference>
<dbReference type="InterPro" id="IPR005144">
    <property type="entry name" value="ATP-cone_dom"/>
</dbReference>
<dbReference type="InterPro" id="IPR055173">
    <property type="entry name" value="NrdR-like_N"/>
</dbReference>
<dbReference type="InterPro" id="IPR003796">
    <property type="entry name" value="RNR_NrdR-like"/>
</dbReference>
<dbReference type="NCBIfam" id="TIGR00244">
    <property type="entry name" value="transcriptional regulator NrdR"/>
    <property type="match status" value="1"/>
</dbReference>
<dbReference type="PANTHER" id="PTHR30455">
    <property type="entry name" value="TRANSCRIPTIONAL REPRESSOR NRDR"/>
    <property type="match status" value="1"/>
</dbReference>
<dbReference type="PANTHER" id="PTHR30455:SF2">
    <property type="entry name" value="TRANSCRIPTIONAL REPRESSOR NRDR"/>
    <property type="match status" value="1"/>
</dbReference>
<dbReference type="Pfam" id="PF03477">
    <property type="entry name" value="ATP-cone"/>
    <property type="match status" value="1"/>
</dbReference>
<dbReference type="Pfam" id="PF22811">
    <property type="entry name" value="Zn_ribbon_NrdR"/>
    <property type="match status" value="1"/>
</dbReference>
<dbReference type="PROSITE" id="PS51161">
    <property type="entry name" value="ATP_CONE"/>
    <property type="match status" value="1"/>
</dbReference>
<proteinExistence type="inferred from homology"/>
<keyword id="KW-0067">ATP-binding</keyword>
<keyword id="KW-0238">DNA-binding</keyword>
<keyword id="KW-0479">Metal-binding</keyword>
<keyword id="KW-0547">Nucleotide-binding</keyword>
<keyword id="KW-0678">Repressor</keyword>
<keyword id="KW-0804">Transcription</keyword>
<keyword id="KW-0805">Transcription regulation</keyword>
<keyword id="KW-0862">Zinc</keyword>
<keyword id="KW-0863">Zinc-finger</keyword>
<protein>
    <recommendedName>
        <fullName evidence="1">Transcriptional repressor NrdR</fullName>
    </recommendedName>
</protein>
<reference key="1">
    <citation type="journal article" date="2001" name="Lancet">
        <title>Whole genome sequencing of meticillin-resistant Staphylococcus aureus.</title>
        <authorList>
            <person name="Kuroda M."/>
            <person name="Ohta T."/>
            <person name="Uchiyama I."/>
            <person name="Baba T."/>
            <person name="Yuzawa H."/>
            <person name="Kobayashi I."/>
            <person name="Cui L."/>
            <person name="Oguchi A."/>
            <person name="Aoki K."/>
            <person name="Nagai Y."/>
            <person name="Lian J.-Q."/>
            <person name="Ito T."/>
            <person name="Kanamori M."/>
            <person name="Matsumaru H."/>
            <person name="Maruyama A."/>
            <person name="Murakami H."/>
            <person name="Hosoyama A."/>
            <person name="Mizutani-Ui Y."/>
            <person name="Takahashi N.K."/>
            <person name="Sawano T."/>
            <person name="Inoue R."/>
            <person name="Kaito C."/>
            <person name="Sekimizu K."/>
            <person name="Hirakawa H."/>
            <person name="Kuhara S."/>
            <person name="Goto S."/>
            <person name="Yabuzaki J."/>
            <person name="Kanehisa M."/>
            <person name="Yamashita A."/>
            <person name="Oshima K."/>
            <person name="Furuya K."/>
            <person name="Yoshino C."/>
            <person name="Shiba T."/>
            <person name="Hattori M."/>
            <person name="Ogasawara N."/>
            <person name="Hayashi H."/>
            <person name="Hiramatsu K."/>
        </authorList>
    </citation>
    <scope>NUCLEOTIDE SEQUENCE [LARGE SCALE GENOMIC DNA]</scope>
    <source>
        <strain>Mu50 / ATCC 700699</strain>
    </source>
</reference>